<gene>
    <name type="primary">radA</name>
    <name type="ordered locus">AF_0993</name>
</gene>
<accession>O29269</accession>
<dbReference type="EMBL" id="AE000782">
    <property type="protein sequence ID" value="AAB90248.1"/>
    <property type="molecule type" value="Genomic_DNA"/>
</dbReference>
<dbReference type="EMBL" id="AF090198">
    <property type="protein sequence ID" value="AAD16064.1"/>
    <property type="molecule type" value="Genomic_DNA"/>
</dbReference>
<dbReference type="PIR" id="A69374">
    <property type="entry name" value="A69374"/>
</dbReference>
<dbReference type="RefSeq" id="WP_010878493.1">
    <property type="nucleotide sequence ID" value="NC_000917.1"/>
</dbReference>
<dbReference type="SMR" id="O29269"/>
<dbReference type="STRING" id="224325.AF_0993"/>
<dbReference type="PaxDb" id="224325-AF_0993"/>
<dbReference type="EnsemblBacteria" id="AAB90248">
    <property type="protein sequence ID" value="AAB90248"/>
    <property type="gene ID" value="AF_0993"/>
</dbReference>
<dbReference type="GeneID" id="24794598"/>
<dbReference type="KEGG" id="afu:AF_0993"/>
<dbReference type="eggNOG" id="arCOG00415">
    <property type="taxonomic scope" value="Archaea"/>
</dbReference>
<dbReference type="HOGENOM" id="CLU_041732_0_0_2"/>
<dbReference type="OrthoDB" id="31129at2157"/>
<dbReference type="PhylomeDB" id="O29269"/>
<dbReference type="BRENDA" id="3.6.4.B7">
    <property type="organism ID" value="414"/>
</dbReference>
<dbReference type="Proteomes" id="UP000002199">
    <property type="component" value="Chromosome"/>
</dbReference>
<dbReference type="GO" id="GO:0005524">
    <property type="term" value="F:ATP binding"/>
    <property type="evidence" value="ECO:0007669"/>
    <property type="project" value="UniProtKB-UniRule"/>
</dbReference>
<dbReference type="GO" id="GO:0016887">
    <property type="term" value="F:ATP hydrolysis activity"/>
    <property type="evidence" value="ECO:0007669"/>
    <property type="project" value="InterPro"/>
</dbReference>
<dbReference type="GO" id="GO:0140664">
    <property type="term" value="F:ATP-dependent DNA damage sensor activity"/>
    <property type="evidence" value="ECO:0007669"/>
    <property type="project" value="InterPro"/>
</dbReference>
<dbReference type="GO" id="GO:0003684">
    <property type="term" value="F:damaged DNA binding"/>
    <property type="evidence" value="ECO:0007669"/>
    <property type="project" value="UniProtKB-UniRule"/>
</dbReference>
<dbReference type="GO" id="GO:0006310">
    <property type="term" value="P:DNA recombination"/>
    <property type="evidence" value="ECO:0007669"/>
    <property type="project" value="UniProtKB-UniRule"/>
</dbReference>
<dbReference type="GO" id="GO:0006281">
    <property type="term" value="P:DNA repair"/>
    <property type="evidence" value="ECO:0007669"/>
    <property type="project" value="UniProtKB-UniRule"/>
</dbReference>
<dbReference type="CDD" id="cd19515">
    <property type="entry name" value="archRadA"/>
    <property type="match status" value="1"/>
</dbReference>
<dbReference type="FunFam" id="3.40.50.300:FF:002052">
    <property type="entry name" value="DNA repair protein RAD51 homolog"/>
    <property type="match status" value="1"/>
</dbReference>
<dbReference type="Gene3D" id="1.10.150.20">
    <property type="entry name" value="5' to 3' exonuclease, C-terminal subdomain"/>
    <property type="match status" value="1"/>
</dbReference>
<dbReference type="Gene3D" id="3.40.50.300">
    <property type="entry name" value="P-loop containing nucleotide triphosphate hydrolases"/>
    <property type="match status" value="1"/>
</dbReference>
<dbReference type="HAMAP" id="MF_00348">
    <property type="entry name" value="RadA_arch"/>
    <property type="match status" value="1"/>
</dbReference>
<dbReference type="InterPro" id="IPR003593">
    <property type="entry name" value="AAA+_ATPase"/>
</dbReference>
<dbReference type="InterPro" id="IPR013632">
    <property type="entry name" value="DNA_recomb/repair_Rad51_C"/>
</dbReference>
<dbReference type="InterPro" id="IPR011938">
    <property type="entry name" value="DNA_recomb/repair_RadA"/>
</dbReference>
<dbReference type="InterPro" id="IPR016467">
    <property type="entry name" value="DNA_recomb/repair_RecA-like"/>
</dbReference>
<dbReference type="InterPro" id="IPR010995">
    <property type="entry name" value="DNA_repair_Rad51/TF_NusA_a-hlx"/>
</dbReference>
<dbReference type="InterPro" id="IPR003583">
    <property type="entry name" value="Hlx-hairpin-Hlx_DNA-bd_motif"/>
</dbReference>
<dbReference type="InterPro" id="IPR027417">
    <property type="entry name" value="P-loop_NTPase"/>
</dbReference>
<dbReference type="InterPro" id="IPR020588">
    <property type="entry name" value="RecA_ATP-bd"/>
</dbReference>
<dbReference type="InterPro" id="IPR020587">
    <property type="entry name" value="RecA_monomer-monomer_interface"/>
</dbReference>
<dbReference type="NCBIfam" id="NF003301">
    <property type="entry name" value="PRK04301.1"/>
    <property type="match status" value="1"/>
</dbReference>
<dbReference type="NCBIfam" id="TIGR02236">
    <property type="entry name" value="recomb_radA"/>
    <property type="match status" value="1"/>
</dbReference>
<dbReference type="PANTHER" id="PTHR22942:SF30">
    <property type="entry name" value="MEIOTIC RECOMBINATION PROTEIN DMC1_LIM15 HOMOLOG"/>
    <property type="match status" value="1"/>
</dbReference>
<dbReference type="PANTHER" id="PTHR22942">
    <property type="entry name" value="RECA/RAD51/RADA DNA STRAND-PAIRING FAMILY MEMBER"/>
    <property type="match status" value="1"/>
</dbReference>
<dbReference type="Pfam" id="PF14520">
    <property type="entry name" value="HHH_5"/>
    <property type="match status" value="1"/>
</dbReference>
<dbReference type="Pfam" id="PF08423">
    <property type="entry name" value="Rad51"/>
    <property type="match status" value="1"/>
</dbReference>
<dbReference type="PIRSF" id="PIRSF005856">
    <property type="entry name" value="Rad51"/>
    <property type="match status" value="1"/>
</dbReference>
<dbReference type="SMART" id="SM00382">
    <property type="entry name" value="AAA"/>
    <property type="match status" value="1"/>
</dbReference>
<dbReference type="SMART" id="SM00278">
    <property type="entry name" value="HhH1"/>
    <property type="match status" value="2"/>
</dbReference>
<dbReference type="SUPFAM" id="SSF52540">
    <property type="entry name" value="P-loop containing nucleoside triphosphate hydrolases"/>
    <property type="match status" value="1"/>
</dbReference>
<dbReference type="SUPFAM" id="SSF47794">
    <property type="entry name" value="Rad51 N-terminal domain-like"/>
    <property type="match status" value="1"/>
</dbReference>
<dbReference type="PROSITE" id="PS50162">
    <property type="entry name" value="RECA_2"/>
    <property type="match status" value="1"/>
</dbReference>
<dbReference type="PROSITE" id="PS50163">
    <property type="entry name" value="RECA_3"/>
    <property type="match status" value="1"/>
</dbReference>
<protein>
    <recommendedName>
        <fullName>DNA repair and recombination protein RadA</fullName>
    </recommendedName>
</protein>
<reference key="1">
    <citation type="journal article" date="1997" name="Nature">
        <title>The complete genome sequence of the hyperthermophilic, sulphate-reducing archaeon Archaeoglobus fulgidus.</title>
        <authorList>
            <person name="Klenk H.-P."/>
            <person name="Clayton R.A."/>
            <person name="Tomb J.-F."/>
            <person name="White O."/>
            <person name="Nelson K.E."/>
            <person name="Ketchum K.A."/>
            <person name="Dodson R.J."/>
            <person name="Gwinn M.L."/>
            <person name="Hickey E.K."/>
            <person name="Peterson J.D."/>
            <person name="Richardson D.L."/>
            <person name="Kerlavage A.R."/>
            <person name="Graham D.E."/>
            <person name="Kyrpides N.C."/>
            <person name="Fleischmann R.D."/>
            <person name="Quackenbush J."/>
            <person name="Lee N.H."/>
            <person name="Sutton G.G."/>
            <person name="Gill S.R."/>
            <person name="Kirkness E.F."/>
            <person name="Dougherty B.A."/>
            <person name="McKenney K."/>
            <person name="Adams M.D."/>
            <person name="Loftus B.J."/>
            <person name="Peterson S.N."/>
            <person name="Reich C.I."/>
            <person name="McNeil L.K."/>
            <person name="Badger J.H."/>
            <person name="Glodek A."/>
            <person name="Zhou L."/>
            <person name="Overbeek R."/>
            <person name="Gocayne J.D."/>
            <person name="Weidman J.F."/>
            <person name="McDonald L.A."/>
            <person name="Utterback T.R."/>
            <person name="Cotton M.D."/>
            <person name="Spriggs T."/>
            <person name="Artiach P."/>
            <person name="Kaine B.P."/>
            <person name="Sykes S.M."/>
            <person name="Sadow P.W."/>
            <person name="D'Andrea K.P."/>
            <person name="Bowman C."/>
            <person name="Fujii C."/>
            <person name="Garland S.A."/>
            <person name="Mason T.M."/>
            <person name="Olsen G.J."/>
            <person name="Fraser C.M."/>
            <person name="Smith H.O."/>
            <person name="Woese C.R."/>
            <person name="Venter J.C."/>
        </authorList>
    </citation>
    <scope>NUCLEOTIDE SEQUENCE [LARGE SCALE GENOMIC DNA]</scope>
    <source>
        <strain>ATCC 49558 / DSM 4304 / JCM 9628 / NBRC 100126 / VC-16</strain>
    </source>
</reference>
<reference key="2">
    <citation type="journal article" date="1999" name="J. Bacteriol.">
        <title>Diversity of radA genes from cultured and uncultured archaea: comparative analysis of putative RadA proteins and their use as a phylogenetic marker.</title>
        <authorList>
            <person name="Sandler S.J."/>
            <person name="Hugenholtz P."/>
            <person name="Schleper C."/>
            <person name="DeLong E.F."/>
            <person name="Pace N.R."/>
            <person name="Clark A.J."/>
        </authorList>
    </citation>
    <scope>NUCLEOTIDE SEQUENCE [GENOMIC DNA] OF 123-258</scope>
</reference>
<keyword id="KW-0067">ATP-binding</keyword>
<keyword id="KW-0227">DNA damage</keyword>
<keyword id="KW-0233">DNA recombination</keyword>
<keyword id="KW-0238">DNA-binding</keyword>
<keyword id="KW-0547">Nucleotide-binding</keyword>
<keyword id="KW-1185">Reference proteome</keyword>
<comment type="function">
    <text evidence="1">Involved in DNA repair and in homologous recombination. Binds and assemble on single-stranded DNA to form a nucleoprotein filament. Hydrolyzes ATP in a ssDNA-dependent manner and promotes DNA strand exchange between homologous DNA molecules (By similarity).</text>
</comment>
<comment type="similarity">
    <text evidence="3">Belongs to the eukaryotic RecA-like protein family.</text>
</comment>
<sequence>MSEESNEETKIIELEDIPGVGPETARKLREAGYSTIEAVAVASPSELANVGGITEGNAVKIIQAARKLANIGGFESGDKVLERRRSVKKITTGSKDLDELLGGGVETQAITEFFGEFGSGKTQICHQLAVNVQLPEDEGGLEGSVIIIDTENTFRPERIIQMAEAKGLDGNEVLKNIYVAQAYNSNHQMLLVDNAKELAEKLKKEGRPVRLIIVDSLMSHFRAEYVGRGTLADRQQKLNRHLHDLMKFGELYNAAIVVTNQVMARPDVLFGDPTKPVGGHIVAHTATFRIYLKKGKDDLRIARLIDSPHLPEGEAIFRVTERGIEDAEEKDKKKRKK</sequence>
<name>RADA_ARCFU</name>
<proteinExistence type="inferred from homology"/>
<feature type="chain" id="PRO_0000150089" description="DNA repair and recombination protein RadA">
    <location>
        <begin position="1"/>
        <end position="337"/>
    </location>
</feature>
<feature type="binding site" evidence="2">
    <location>
        <begin position="115"/>
        <end position="122"/>
    </location>
    <ligand>
        <name>ATP</name>
        <dbReference type="ChEBI" id="CHEBI:30616"/>
    </ligand>
</feature>
<organism>
    <name type="scientific">Archaeoglobus fulgidus (strain ATCC 49558 / DSM 4304 / JCM 9628 / NBRC 100126 / VC-16)</name>
    <dbReference type="NCBI Taxonomy" id="224325"/>
    <lineage>
        <taxon>Archaea</taxon>
        <taxon>Methanobacteriati</taxon>
        <taxon>Methanobacteriota</taxon>
        <taxon>Archaeoglobi</taxon>
        <taxon>Archaeoglobales</taxon>
        <taxon>Archaeoglobaceae</taxon>
        <taxon>Archaeoglobus</taxon>
    </lineage>
</organism>
<evidence type="ECO:0000250" key="1"/>
<evidence type="ECO:0000255" key="2"/>
<evidence type="ECO:0000305" key="3"/>